<organism>
    <name type="scientific">Arabidopsis thaliana</name>
    <name type="common">Mouse-ear cress</name>
    <dbReference type="NCBI Taxonomy" id="3702"/>
    <lineage>
        <taxon>Eukaryota</taxon>
        <taxon>Viridiplantae</taxon>
        <taxon>Streptophyta</taxon>
        <taxon>Embryophyta</taxon>
        <taxon>Tracheophyta</taxon>
        <taxon>Spermatophyta</taxon>
        <taxon>Magnoliopsida</taxon>
        <taxon>eudicotyledons</taxon>
        <taxon>Gunneridae</taxon>
        <taxon>Pentapetalae</taxon>
        <taxon>rosids</taxon>
        <taxon>malvids</taxon>
        <taxon>Brassicales</taxon>
        <taxon>Brassicaceae</taxon>
        <taxon>Camelineae</taxon>
        <taxon>Arabidopsis</taxon>
    </lineage>
</organism>
<keyword id="KW-1003">Cell membrane</keyword>
<keyword id="KW-0472">Membrane</keyword>
<keyword id="KW-1185">Reference proteome</keyword>
<keyword id="KW-0812">Transmembrane</keyword>
<keyword id="KW-1133">Transmembrane helix</keyword>
<sequence length="190" mass="20313">MEHEGKNNMNGMEMEKGKRELGSRKGVELTMRVLALILTMAAATVLGVAKQTKVVSIKLIPTLPPLDITTTAKASYLSAFVYNISVNAIACGYTAISIAILMISRGRRSKKLLMVVLLGDLVMVALLFSGTGAASAIGLMGLHGNKHVMWKKVCGVFGKFCHRAAPSLPLTLLAAVVFMFLVVLDAIKLP</sequence>
<gene>
    <name type="ordered locus">At4g15620</name>
    <name type="ORF">Dl3850w</name>
    <name type="ORF">FCAALL.348</name>
</gene>
<dbReference type="EMBL" id="Z97339">
    <property type="protein sequence ID" value="CAB10340.1"/>
    <property type="molecule type" value="Genomic_DNA"/>
</dbReference>
<dbReference type="EMBL" id="AL161542">
    <property type="protein sequence ID" value="CAB78604.1"/>
    <property type="molecule type" value="Genomic_DNA"/>
</dbReference>
<dbReference type="EMBL" id="CP002687">
    <property type="protein sequence ID" value="AEE83629.1"/>
    <property type="molecule type" value="Genomic_DNA"/>
</dbReference>
<dbReference type="EMBL" id="BT002974">
    <property type="protein sequence ID" value="AAO22783.1"/>
    <property type="molecule type" value="mRNA"/>
</dbReference>
<dbReference type="EMBL" id="BT004455">
    <property type="protein sequence ID" value="AAO42449.1"/>
    <property type="molecule type" value="mRNA"/>
</dbReference>
<dbReference type="PIR" id="B71421">
    <property type="entry name" value="B71421"/>
</dbReference>
<dbReference type="RefSeq" id="NP_193297.1">
    <property type="nucleotide sequence ID" value="NM_117653.6"/>
</dbReference>
<dbReference type="BioGRID" id="12533">
    <property type="interactions" value="24"/>
</dbReference>
<dbReference type="FunCoup" id="O23413">
    <property type="interactions" value="58"/>
</dbReference>
<dbReference type="IntAct" id="O23413">
    <property type="interactions" value="24"/>
</dbReference>
<dbReference type="STRING" id="3702.O23413"/>
<dbReference type="PaxDb" id="3702-AT4G15620.1"/>
<dbReference type="ProteomicsDB" id="222713"/>
<dbReference type="EnsemblPlants" id="AT4G15620.1">
    <property type="protein sequence ID" value="AT4G15620.1"/>
    <property type="gene ID" value="AT4G15620"/>
</dbReference>
<dbReference type="GeneID" id="827239"/>
<dbReference type="Gramene" id="AT4G15620.1">
    <property type="protein sequence ID" value="AT4G15620.1"/>
    <property type="gene ID" value="AT4G15620"/>
</dbReference>
<dbReference type="KEGG" id="ath:AT4G15620"/>
<dbReference type="Araport" id="AT4G15620"/>
<dbReference type="TAIR" id="AT4G15620">
    <property type="gene designation" value="CASPL1E2"/>
</dbReference>
<dbReference type="eggNOG" id="ENOG502RZNK">
    <property type="taxonomic scope" value="Eukaryota"/>
</dbReference>
<dbReference type="HOGENOM" id="CLU_066104_1_0_1"/>
<dbReference type="InParanoid" id="O23413"/>
<dbReference type="OMA" id="IACTHTA"/>
<dbReference type="PhylomeDB" id="O23413"/>
<dbReference type="PRO" id="PR:O23413"/>
<dbReference type="Proteomes" id="UP000006548">
    <property type="component" value="Chromosome 4"/>
</dbReference>
<dbReference type="ExpressionAtlas" id="O23413">
    <property type="expression patterns" value="baseline and differential"/>
</dbReference>
<dbReference type="GO" id="GO:0005886">
    <property type="term" value="C:plasma membrane"/>
    <property type="evidence" value="ECO:0000314"/>
    <property type="project" value="UniProtKB"/>
</dbReference>
<dbReference type="InterPro" id="IPR006459">
    <property type="entry name" value="CASP/CASPL"/>
</dbReference>
<dbReference type="InterPro" id="IPR006702">
    <property type="entry name" value="CASP_dom"/>
</dbReference>
<dbReference type="InterPro" id="IPR044173">
    <property type="entry name" value="CASPL"/>
</dbReference>
<dbReference type="NCBIfam" id="TIGR01569">
    <property type="entry name" value="A_tha_TIGR01569"/>
    <property type="match status" value="1"/>
</dbReference>
<dbReference type="PANTHER" id="PTHR36488">
    <property type="entry name" value="CASP-LIKE PROTEIN 1U1"/>
    <property type="match status" value="1"/>
</dbReference>
<dbReference type="PANTHER" id="PTHR36488:SF8">
    <property type="entry name" value="CASP-LIKE PROTEIN 1U1"/>
    <property type="match status" value="1"/>
</dbReference>
<dbReference type="Pfam" id="PF04535">
    <property type="entry name" value="CASP_dom"/>
    <property type="match status" value="1"/>
</dbReference>
<reference key="1">
    <citation type="journal article" date="1998" name="Nature">
        <title>Analysis of 1.9 Mb of contiguous sequence from chromosome 4 of Arabidopsis thaliana.</title>
        <authorList>
            <person name="Bevan M."/>
            <person name="Bancroft I."/>
            <person name="Bent E."/>
            <person name="Love K."/>
            <person name="Goodman H.M."/>
            <person name="Dean C."/>
            <person name="Bergkamp R."/>
            <person name="Dirkse W."/>
            <person name="van Staveren M."/>
            <person name="Stiekema W."/>
            <person name="Drost L."/>
            <person name="Ridley P."/>
            <person name="Hudson S.-A."/>
            <person name="Patel K."/>
            <person name="Murphy G."/>
            <person name="Piffanelli P."/>
            <person name="Wedler H."/>
            <person name="Wedler E."/>
            <person name="Wambutt R."/>
            <person name="Weitzenegger T."/>
            <person name="Pohl T."/>
            <person name="Terryn N."/>
            <person name="Gielen J."/>
            <person name="Villarroel R."/>
            <person name="De Clercq R."/>
            <person name="van Montagu M."/>
            <person name="Lecharny A."/>
            <person name="Aubourg S."/>
            <person name="Gy I."/>
            <person name="Kreis M."/>
            <person name="Lao N."/>
            <person name="Kavanagh T."/>
            <person name="Hempel S."/>
            <person name="Kotter P."/>
            <person name="Entian K.-D."/>
            <person name="Rieger M."/>
            <person name="Schaefer M."/>
            <person name="Funk B."/>
            <person name="Mueller-Auer S."/>
            <person name="Silvey M."/>
            <person name="James R."/>
            <person name="Monfort A."/>
            <person name="Pons A."/>
            <person name="Puigdomenech P."/>
            <person name="Douka A."/>
            <person name="Voukelatou E."/>
            <person name="Milioni D."/>
            <person name="Hatzopoulos P."/>
            <person name="Piravandi E."/>
            <person name="Obermaier B."/>
            <person name="Hilbert H."/>
            <person name="Duesterhoeft A."/>
            <person name="Moores T."/>
            <person name="Jones J.D.G."/>
            <person name="Eneva T."/>
            <person name="Palme K."/>
            <person name="Benes V."/>
            <person name="Rechmann S."/>
            <person name="Ansorge W."/>
            <person name="Cooke R."/>
            <person name="Berger C."/>
            <person name="Delseny M."/>
            <person name="Voet M."/>
            <person name="Volckaert G."/>
            <person name="Mewes H.-W."/>
            <person name="Klosterman S."/>
            <person name="Schueller C."/>
            <person name="Chalwatzis N."/>
        </authorList>
    </citation>
    <scope>NUCLEOTIDE SEQUENCE [LARGE SCALE GENOMIC DNA]</scope>
    <source>
        <strain>cv. Columbia</strain>
    </source>
</reference>
<reference key="2">
    <citation type="journal article" date="1999" name="Nature">
        <title>Sequence and analysis of chromosome 4 of the plant Arabidopsis thaliana.</title>
        <authorList>
            <person name="Mayer K.F.X."/>
            <person name="Schueller C."/>
            <person name="Wambutt R."/>
            <person name="Murphy G."/>
            <person name="Volckaert G."/>
            <person name="Pohl T."/>
            <person name="Duesterhoeft A."/>
            <person name="Stiekema W."/>
            <person name="Entian K.-D."/>
            <person name="Terryn N."/>
            <person name="Harris B."/>
            <person name="Ansorge W."/>
            <person name="Brandt P."/>
            <person name="Grivell L.A."/>
            <person name="Rieger M."/>
            <person name="Weichselgartner M."/>
            <person name="de Simone V."/>
            <person name="Obermaier B."/>
            <person name="Mache R."/>
            <person name="Mueller M."/>
            <person name="Kreis M."/>
            <person name="Delseny M."/>
            <person name="Puigdomenech P."/>
            <person name="Watson M."/>
            <person name="Schmidtheini T."/>
            <person name="Reichert B."/>
            <person name="Portetelle D."/>
            <person name="Perez-Alonso M."/>
            <person name="Boutry M."/>
            <person name="Bancroft I."/>
            <person name="Vos P."/>
            <person name="Hoheisel J."/>
            <person name="Zimmermann W."/>
            <person name="Wedler H."/>
            <person name="Ridley P."/>
            <person name="Langham S.-A."/>
            <person name="McCullagh B."/>
            <person name="Bilham L."/>
            <person name="Robben J."/>
            <person name="van der Schueren J."/>
            <person name="Grymonprez B."/>
            <person name="Chuang Y.-J."/>
            <person name="Vandenbussche F."/>
            <person name="Braeken M."/>
            <person name="Weltjens I."/>
            <person name="Voet M."/>
            <person name="Bastiaens I."/>
            <person name="Aert R."/>
            <person name="Defoor E."/>
            <person name="Weitzenegger T."/>
            <person name="Bothe G."/>
            <person name="Ramsperger U."/>
            <person name="Hilbert H."/>
            <person name="Braun M."/>
            <person name="Holzer E."/>
            <person name="Brandt A."/>
            <person name="Peters S."/>
            <person name="van Staveren M."/>
            <person name="Dirkse W."/>
            <person name="Mooijman P."/>
            <person name="Klein Lankhorst R."/>
            <person name="Rose M."/>
            <person name="Hauf J."/>
            <person name="Koetter P."/>
            <person name="Berneiser S."/>
            <person name="Hempel S."/>
            <person name="Feldpausch M."/>
            <person name="Lamberth S."/>
            <person name="Van den Daele H."/>
            <person name="De Keyser A."/>
            <person name="Buysshaert C."/>
            <person name="Gielen J."/>
            <person name="Villarroel R."/>
            <person name="De Clercq R."/>
            <person name="van Montagu M."/>
            <person name="Rogers J."/>
            <person name="Cronin A."/>
            <person name="Quail M.A."/>
            <person name="Bray-Allen S."/>
            <person name="Clark L."/>
            <person name="Doggett J."/>
            <person name="Hall S."/>
            <person name="Kay M."/>
            <person name="Lennard N."/>
            <person name="McLay K."/>
            <person name="Mayes R."/>
            <person name="Pettett A."/>
            <person name="Rajandream M.A."/>
            <person name="Lyne M."/>
            <person name="Benes V."/>
            <person name="Rechmann S."/>
            <person name="Borkova D."/>
            <person name="Bloecker H."/>
            <person name="Scharfe M."/>
            <person name="Grimm M."/>
            <person name="Loehnert T.-H."/>
            <person name="Dose S."/>
            <person name="de Haan M."/>
            <person name="Maarse A.C."/>
            <person name="Schaefer M."/>
            <person name="Mueller-Auer S."/>
            <person name="Gabel C."/>
            <person name="Fuchs M."/>
            <person name="Fartmann B."/>
            <person name="Granderath K."/>
            <person name="Dauner D."/>
            <person name="Herzl A."/>
            <person name="Neumann S."/>
            <person name="Argiriou A."/>
            <person name="Vitale D."/>
            <person name="Liguori R."/>
            <person name="Piravandi E."/>
            <person name="Massenet O."/>
            <person name="Quigley F."/>
            <person name="Clabauld G."/>
            <person name="Muendlein A."/>
            <person name="Felber R."/>
            <person name="Schnabl S."/>
            <person name="Hiller R."/>
            <person name="Schmidt W."/>
            <person name="Lecharny A."/>
            <person name="Aubourg S."/>
            <person name="Chefdor F."/>
            <person name="Cooke R."/>
            <person name="Berger C."/>
            <person name="Monfort A."/>
            <person name="Casacuberta E."/>
            <person name="Gibbons T."/>
            <person name="Weber N."/>
            <person name="Vandenbol M."/>
            <person name="Bargues M."/>
            <person name="Terol J."/>
            <person name="Torres A."/>
            <person name="Perez-Perez A."/>
            <person name="Purnelle B."/>
            <person name="Bent E."/>
            <person name="Johnson S."/>
            <person name="Tacon D."/>
            <person name="Jesse T."/>
            <person name="Heijnen L."/>
            <person name="Schwarz S."/>
            <person name="Scholler P."/>
            <person name="Heber S."/>
            <person name="Francs P."/>
            <person name="Bielke C."/>
            <person name="Frishman D."/>
            <person name="Haase D."/>
            <person name="Lemcke K."/>
            <person name="Mewes H.-W."/>
            <person name="Stocker S."/>
            <person name="Zaccaria P."/>
            <person name="Bevan M."/>
            <person name="Wilson R.K."/>
            <person name="de la Bastide M."/>
            <person name="Habermann K."/>
            <person name="Parnell L."/>
            <person name="Dedhia N."/>
            <person name="Gnoj L."/>
            <person name="Schutz K."/>
            <person name="Huang E."/>
            <person name="Spiegel L."/>
            <person name="Sekhon M."/>
            <person name="Murray J."/>
            <person name="Sheet P."/>
            <person name="Cordes M."/>
            <person name="Abu-Threideh J."/>
            <person name="Stoneking T."/>
            <person name="Kalicki J."/>
            <person name="Graves T."/>
            <person name="Harmon G."/>
            <person name="Edwards J."/>
            <person name="Latreille P."/>
            <person name="Courtney L."/>
            <person name="Cloud J."/>
            <person name="Abbott A."/>
            <person name="Scott K."/>
            <person name="Johnson D."/>
            <person name="Minx P."/>
            <person name="Bentley D."/>
            <person name="Fulton B."/>
            <person name="Miller N."/>
            <person name="Greco T."/>
            <person name="Kemp K."/>
            <person name="Kramer J."/>
            <person name="Fulton L."/>
            <person name="Mardis E."/>
            <person name="Dante M."/>
            <person name="Pepin K."/>
            <person name="Hillier L.W."/>
            <person name="Nelson J."/>
            <person name="Spieth J."/>
            <person name="Ryan E."/>
            <person name="Andrews S."/>
            <person name="Geisel C."/>
            <person name="Layman D."/>
            <person name="Du H."/>
            <person name="Ali J."/>
            <person name="Berghoff A."/>
            <person name="Jones K."/>
            <person name="Drone K."/>
            <person name="Cotton M."/>
            <person name="Joshu C."/>
            <person name="Antonoiu B."/>
            <person name="Zidanic M."/>
            <person name="Strong C."/>
            <person name="Sun H."/>
            <person name="Lamar B."/>
            <person name="Yordan C."/>
            <person name="Ma P."/>
            <person name="Zhong J."/>
            <person name="Preston R."/>
            <person name="Vil D."/>
            <person name="Shekher M."/>
            <person name="Matero A."/>
            <person name="Shah R."/>
            <person name="Swaby I.K."/>
            <person name="O'Shaughnessy A."/>
            <person name="Rodriguez M."/>
            <person name="Hoffman J."/>
            <person name="Till S."/>
            <person name="Granat S."/>
            <person name="Shohdy N."/>
            <person name="Hasegawa A."/>
            <person name="Hameed A."/>
            <person name="Lodhi M."/>
            <person name="Johnson A."/>
            <person name="Chen E."/>
            <person name="Marra M.A."/>
            <person name="Martienssen R."/>
            <person name="McCombie W.R."/>
        </authorList>
    </citation>
    <scope>NUCLEOTIDE SEQUENCE [LARGE SCALE GENOMIC DNA]</scope>
    <source>
        <strain>cv. Columbia</strain>
    </source>
</reference>
<reference key="3">
    <citation type="journal article" date="2017" name="Plant J.">
        <title>Araport11: a complete reannotation of the Arabidopsis thaliana reference genome.</title>
        <authorList>
            <person name="Cheng C.Y."/>
            <person name="Krishnakumar V."/>
            <person name="Chan A.P."/>
            <person name="Thibaud-Nissen F."/>
            <person name="Schobel S."/>
            <person name="Town C.D."/>
        </authorList>
    </citation>
    <scope>GENOME REANNOTATION</scope>
    <source>
        <strain>cv. Columbia</strain>
    </source>
</reference>
<reference key="4">
    <citation type="journal article" date="2003" name="Science">
        <title>Empirical analysis of transcriptional activity in the Arabidopsis genome.</title>
        <authorList>
            <person name="Yamada K."/>
            <person name="Lim J."/>
            <person name="Dale J.M."/>
            <person name="Chen H."/>
            <person name="Shinn P."/>
            <person name="Palm C.J."/>
            <person name="Southwick A.M."/>
            <person name="Wu H.C."/>
            <person name="Kim C.J."/>
            <person name="Nguyen M."/>
            <person name="Pham P.K."/>
            <person name="Cheuk R.F."/>
            <person name="Karlin-Newmann G."/>
            <person name="Liu S.X."/>
            <person name="Lam B."/>
            <person name="Sakano H."/>
            <person name="Wu T."/>
            <person name="Yu G."/>
            <person name="Miranda M."/>
            <person name="Quach H.L."/>
            <person name="Tripp M."/>
            <person name="Chang C.H."/>
            <person name="Lee J.M."/>
            <person name="Toriumi M.J."/>
            <person name="Chan M.M."/>
            <person name="Tang C.C."/>
            <person name="Onodera C.S."/>
            <person name="Deng J.M."/>
            <person name="Akiyama K."/>
            <person name="Ansari Y."/>
            <person name="Arakawa T."/>
            <person name="Banh J."/>
            <person name="Banno F."/>
            <person name="Bowser L."/>
            <person name="Brooks S.Y."/>
            <person name="Carninci P."/>
            <person name="Chao Q."/>
            <person name="Choy N."/>
            <person name="Enju A."/>
            <person name="Goldsmith A.D."/>
            <person name="Gurjal M."/>
            <person name="Hansen N.F."/>
            <person name="Hayashizaki Y."/>
            <person name="Johnson-Hopson C."/>
            <person name="Hsuan V.W."/>
            <person name="Iida K."/>
            <person name="Karnes M."/>
            <person name="Khan S."/>
            <person name="Koesema E."/>
            <person name="Ishida J."/>
            <person name="Jiang P.X."/>
            <person name="Jones T."/>
            <person name="Kawai J."/>
            <person name="Kamiya A."/>
            <person name="Meyers C."/>
            <person name="Nakajima M."/>
            <person name="Narusaka M."/>
            <person name="Seki M."/>
            <person name="Sakurai T."/>
            <person name="Satou M."/>
            <person name="Tamse R."/>
            <person name="Vaysberg M."/>
            <person name="Wallender E.K."/>
            <person name="Wong C."/>
            <person name="Yamamura Y."/>
            <person name="Yuan S."/>
            <person name="Shinozaki K."/>
            <person name="Davis R.W."/>
            <person name="Theologis A."/>
            <person name="Ecker J.R."/>
        </authorList>
    </citation>
    <scope>NUCLEOTIDE SEQUENCE [LARGE SCALE MRNA]</scope>
    <source>
        <strain>cv. Columbia</strain>
    </source>
</reference>
<reference key="5">
    <citation type="journal article" date="2014" name="Plant Physiol.">
        <title>Functional and evolutionary analysis of the CASPARIAN STRIP MEMBRANE DOMAIN PROTEIN family.</title>
        <authorList>
            <person name="Roppolo D."/>
            <person name="Boeckmann B."/>
            <person name="Pfister A."/>
            <person name="Boutet E."/>
            <person name="Rubio M.C."/>
            <person name="Denervaud-Tendon V."/>
            <person name="Vermeer J.E."/>
            <person name="Gheyselinck J."/>
            <person name="Xenarios I."/>
            <person name="Geldner N."/>
        </authorList>
    </citation>
    <scope>SUBCELLULAR LOCATION</scope>
    <scope>GENE FAMILY</scope>
    <scope>NOMENCLATURE</scope>
</reference>
<accession>O23413</accession>
<protein>
    <recommendedName>
        <fullName>CASP-like protein 1E2</fullName>
        <shortName>AtCASPL1E2</shortName>
    </recommendedName>
</protein>
<comment type="subunit">
    <text evidence="1">Homodimer and heterodimers.</text>
</comment>
<comment type="subcellular location">
    <subcellularLocation>
        <location evidence="4">Cell membrane</location>
        <topology evidence="4">Multi-pass membrane protein</topology>
    </subcellularLocation>
</comment>
<comment type="similarity">
    <text evidence="5">Belongs to the Casparian strip membrane proteins (CASP) family.</text>
</comment>
<feature type="chain" id="PRO_0000308676" description="CASP-like protein 1E2">
    <location>
        <begin position="1"/>
        <end position="190"/>
    </location>
</feature>
<feature type="topological domain" description="Cytoplasmic" evidence="2">
    <location>
        <begin position="1"/>
        <end position="28"/>
    </location>
</feature>
<feature type="transmembrane region" description="Helical" evidence="2">
    <location>
        <begin position="29"/>
        <end position="49"/>
    </location>
</feature>
<feature type="topological domain" description="Extracellular" evidence="2">
    <location>
        <begin position="50"/>
        <end position="83"/>
    </location>
</feature>
<feature type="transmembrane region" description="Helical" evidence="2">
    <location>
        <begin position="84"/>
        <end position="104"/>
    </location>
</feature>
<feature type="topological domain" description="Cytoplasmic" evidence="2">
    <location>
        <begin position="105"/>
        <end position="111"/>
    </location>
</feature>
<feature type="transmembrane region" description="Helical" evidence="2">
    <location>
        <begin position="112"/>
        <end position="132"/>
    </location>
</feature>
<feature type="topological domain" description="Extracellular" evidence="2">
    <location>
        <begin position="133"/>
        <end position="163"/>
    </location>
</feature>
<feature type="transmembrane region" description="Helical" evidence="2">
    <location>
        <begin position="164"/>
        <end position="184"/>
    </location>
</feature>
<feature type="topological domain" description="Cytoplasmic" evidence="2">
    <location>
        <begin position="185"/>
        <end position="190"/>
    </location>
</feature>
<feature type="region of interest" description="Disordered" evidence="3">
    <location>
        <begin position="1"/>
        <end position="21"/>
    </location>
</feature>
<proteinExistence type="evidence at transcript level"/>
<evidence type="ECO:0000250" key="1"/>
<evidence type="ECO:0000255" key="2"/>
<evidence type="ECO:0000256" key="3">
    <source>
        <dbReference type="SAM" id="MobiDB-lite"/>
    </source>
</evidence>
<evidence type="ECO:0000269" key="4">
    <source>
    </source>
</evidence>
<evidence type="ECO:0000305" key="5"/>
<name>CSPLN_ARATH</name>